<accession>Q029U7</accession>
<gene>
    <name type="ordered locus">Acid_1185</name>
</gene>
<sequence length="206" mass="23505">MDWQLDAAELRVLGALMEKEATTPDYYPMSLNALVNACNQKSNREPVVNFDEETVETALHELRAKGLSSRISGESRVPKHEQRFVEKFNLGRREAAVMCVLMLRGPQTVGELRGRTERIFTFDDLEGVESTLQRLAEIGFVKKLPRQTGYKEQRWAQLLAGDIEVAEEAAPAMMERGASDRDRIAALEEEVAELKRAFEQFRRNFE</sequence>
<dbReference type="EMBL" id="CP000473">
    <property type="protein sequence ID" value="ABJ82179.1"/>
    <property type="status" value="ALT_INIT"/>
    <property type="molecule type" value="Genomic_DNA"/>
</dbReference>
<dbReference type="SMR" id="Q029U7"/>
<dbReference type="FunCoup" id="Q029U7">
    <property type="interactions" value="19"/>
</dbReference>
<dbReference type="STRING" id="234267.Acid_1185"/>
<dbReference type="KEGG" id="sus:Acid_1185"/>
<dbReference type="eggNOG" id="COG3132">
    <property type="taxonomic scope" value="Bacteria"/>
</dbReference>
<dbReference type="HOGENOM" id="CLU_057831_1_0_0"/>
<dbReference type="InParanoid" id="Q029U7"/>
<dbReference type="OrthoDB" id="9784785at2"/>
<dbReference type="Gene3D" id="1.10.10.10">
    <property type="entry name" value="Winged helix-like DNA-binding domain superfamily/Winged helix DNA-binding domain"/>
    <property type="match status" value="2"/>
</dbReference>
<dbReference type="HAMAP" id="MF_01584">
    <property type="entry name" value="UPF0502"/>
    <property type="match status" value="1"/>
</dbReference>
<dbReference type="InterPro" id="IPR007432">
    <property type="entry name" value="DUF480"/>
</dbReference>
<dbReference type="InterPro" id="IPR036388">
    <property type="entry name" value="WH-like_DNA-bd_sf"/>
</dbReference>
<dbReference type="InterPro" id="IPR036390">
    <property type="entry name" value="WH_DNA-bd_sf"/>
</dbReference>
<dbReference type="PANTHER" id="PTHR38768">
    <property type="entry name" value="UPF0502 PROTEIN YCEH"/>
    <property type="match status" value="1"/>
</dbReference>
<dbReference type="PANTHER" id="PTHR38768:SF1">
    <property type="entry name" value="UPF0502 PROTEIN YCEH"/>
    <property type="match status" value="1"/>
</dbReference>
<dbReference type="Pfam" id="PF04337">
    <property type="entry name" value="DUF480"/>
    <property type="match status" value="1"/>
</dbReference>
<dbReference type="SUPFAM" id="SSF46785">
    <property type="entry name" value="Winged helix' DNA-binding domain"/>
    <property type="match status" value="2"/>
</dbReference>
<feature type="chain" id="PRO_0000309437" description="UPF0502 protein Acid_1185">
    <location>
        <begin position="1"/>
        <end position="206"/>
    </location>
</feature>
<organism>
    <name type="scientific">Solibacter usitatus (strain Ellin6076)</name>
    <dbReference type="NCBI Taxonomy" id="234267"/>
    <lineage>
        <taxon>Bacteria</taxon>
        <taxon>Pseudomonadati</taxon>
        <taxon>Acidobacteriota</taxon>
        <taxon>Terriglobia</taxon>
        <taxon>Bryobacterales</taxon>
        <taxon>Solibacteraceae</taxon>
        <taxon>Candidatus Solibacter</taxon>
    </lineage>
</organism>
<reference key="1">
    <citation type="journal article" date="2009" name="Appl. Environ. Microbiol.">
        <title>Three genomes from the phylum Acidobacteria provide insight into the lifestyles of these microorganisms in soils.</title>
        <authorList>
            <person name="Ward N.L."/>
            <person name="Challacombe J.F."/>
            <person name="Janssen P.H."/>
            <person name="Henrissat B."/>
            <person name="Coutinho P.M."/>
            <person name="Wu M."/>
            <person name="Xie G."/>
            <person name="Haft D.H."/>
            <person name="Sait M."/>
            <person name="Badger J."/>
            <person name="Barabote R.D."/>
            <person name="Bradley B."/>
            <person name="Brettin T.S."/>
            <person name="Brinkac L.M."/>
            <person name="Bruce D."/>
            <person name="Creasy T."/>
            <person name="Daugherty S.C."/>
            <person name="Davidsen T.M."/>
            <person name="DeBoy R.T."/>
            <person name="Detter J.C."/>
            <person name="Dodson R.J."/>
            <person name="Durkin A.S."/>
            <person name="Ganapathy A."/>
            <person name="Gwinn-Giglio M."/>
            <person name="Han C.S."/>
            <person name="Khouri H."/>
            <person name="Kiss H."/>
            <person name="Kothari S.P."/>
            <person name="Madupu R."/>
            <person name="Nelson K.E."/>
            <person name="Nelson W.C."/>
            <person name="Paulsen I."/>
            <person name="Penn K."/>
            <person name="Ren Q."/>
            <person name="Rosovitz M.J."/>
            <person name="Selengut J.D."/>
            <person name="Shrivastava S."/>
            <person name="Sullivan S.A."/>
            <person name="Tapia R."/>
            <person name="Thompson L.S."/>
            <person name="Watkins K.L."/>
            <person name="Yang Q."/>
            <person name="Yu C."/>
            <person name="Zafar N."/>
            <person name="Zhou L."/>
            <person name="Kuske C.R."/>
        </authorList>
    </citation>
    <scope>NUCLEOTIDE SEQUENCE [LARGE SCALE GENOMIC DNA]</scope>
    <source>
        <strain>Ellin6076</strain>
    </source>
</reference>
<protein>
    <recommendedName>
        <fullName evidence="1">UPF0502 protein Acid_1185</fullName>
    </recommendedName>
</protein>
<name>Y1185_SOLUE</name>
<comment type="similarity">
    <text evidence="1">Belongs to the UPF0502 family.</text>
</comment>
<comment type="sequence caution" evidence="2">
    <conflict type="erroneous initiation">
        <sequence resource="EMBL-CDS" id="ABJ82179"/>
    </conflict>
</comment>
<proteinExistence type="inferred from homology"/>
<evidence type="ECO:0000255" key="1">
    <source>
        <dbReference type="HAMAP-Rule" id="MF_01584"/>
    </source>
</evidence>
<evidence type="ECO:0000305" key="2"/>